<reference key="1">
    <citation type="submission" date="2007-04" db="EMBL/GenBank/DDBJ databases">
        <title>Complete genome sequence of the nitrogen-fixing bacterium Azorhizobium caulinodans ORS571.</title>
        <authorList>
            <person name="Lee K.B."/>
            <person name="Backer P.D."/>
            <person name="Aono T."/>
            <person name="Liu C.T."/>
            <person name="Suzuki S."/>
            <person name="Suzuki T."/>
            <person name="Kaneko T."/>
            <person name="Yamada M."/>
            <person name="Tabata S."/>
            <person name="Kupfer D.M."/>
            <person name="Najar F.Z."/>
            <person name="Wiley G.B."/>
            <person name="Roe B."/>
            <person name="Binnewies T."/>
            <person name="Ussery D."/>
            <person name="Vereecke D."/>
            <person name="Gevers D."/>
            <person name="Holsters M."/>
            <person name="Oyaizu H."/>
        </authorList>
    </citation>
    <scope>NUCLEOTIDE SEQUENCE [LARGE SCALE GENOMIC DNA]</scope>
    <source>
        <strain>ATCC 43989 / DSM 5975 / JCM 20966 / LMG 6465 / NBRC 14845 / NCIMB 13405 / ORS 571</strain>
    </source>
</reference>
<accession>A8IC17</accession>
<comment type="similarity">
    <text evidence="1">Belongs to the UPF0262 family.</text>
</comment>
<dbReference type="EMBL" id="AP009384">
    <property type="protein sequence ID" value="BAF89146.1"/>
    <property type="molecule type" value="Genomic_DNA"/>
</dbReference>
<dbReference type="RefSeq" id="WP_012171672.1">
    <property type="nucleotide sequence ID" value="NC_009937.1"/>
</dbReference>
<dbReference type="STRING" id="438753.AZC_3148"/>
<dbReference type="KEGG" id="azc:AZC_3148"/>
<dbReference type="eggNOG" id="COG5328">
    <property type="taxonomic scope" value="Bacteria"/>
</dbReference>
<dbReference type="HOGENOM" id="CLU_112904_0_0_5"/>
<dbReference type="Proteomes" id="UP000000270">
    <property type="component" value="Chromosome"/>
</dbReference>
<dbReference type="HAMAP" id="MF_00678">
    <property type="entry name" value="UPF0262"/>
    <property type="match status" value="1"/>
</dbReference>
<dbReference type="InterPro" id="IPR008321">
    <property type="entry name" value="UCP032146"/>
</dbReference>
<dbReference type="NCBIfam" id="NF002769">
    <property type="entry name" value="PRK02853.1"/>
    <property type="match status" value="1"/>
</dbReference>
<dbReference type="Pfam" id="PF06793">
    <property type="entry name" value="UPF0262"/>
    <property type="match status" value="1"/>
</dbReference>
<dbReference type="PIRSF" id="PIRSF032146">
    <property type="entry name" value="UCP032146"/>
    <property type="match status" value="1"/>
</dbReference>
<keyword id="KW-1185">Reference proteome</keyword>
<gene>
    <name type="ordered locus">AZC_3148</name>
</gene>
<name>Y3148_AZOC5</name>
<proteinExistence type="inferred from homology"/>
<feature type="chain" id="PRO_1000131646" description="UPF0262 protein AZC_3148">
    <location>
        <begin position="1"/>
        <end position="162"/>
    </location>
</feature>
<evidence type="ECO:0000255" key="1">
    <source>
        <dbReference type="HAMAP-Rule" id="MF_00678"/>
    </source>
</evidence>
<sequence>MSQTPPPNRLCAVTLDDASIGRSGADVEHERAIAIYDLLEDNRFTPVGDPGEGPYTLHIGLMDNRLVLDIRREKGSEPVVQHHLSLSPLRKVVKDYFLICESYYAAIRTASPTQIEAIDMGRRGLHNEGSTLLQERLKDKVEVDFDTARRLFTLICALHWKG</sequence>
<protein>
    <recommendedName>
        <fullName evidence="1">UPF0262 protein AZC_3148</fullName>
    </recommendedName>
</protein>
<organism>
    <name type="scientific">Azorhizobium caulinodans (strain ATCC 43989 / DSM 5975 / JCM 20966 / LMG 6465 / NBRC 14845 / NCIMB 13405 / ORS 571)</name>
    <dbReference type="NCBI Taxonomy" id="438753"/>
    <lineage>
        <taxon>Bacteria</taxon>
        <taxon>Pseudomonadati</taxon>
        <taxon>Pseudomonadota</taxon>
        <taxon>Alphaproteobacteria</taxon>
        <taxon>Hyphomicrobiales</taxon>
        <taxon>Xanthobacteraceae</taxon>
        <taxon>Azorhizobium</taxon>
    </lineage>
</organism>